<evidence type="ECO:0000255" key="1">
    <source>
        <dbReference type="HAMAP-Rule" id="MF_01384"/>
    </source>
</evidence>
<evidence type="ECO:0000305" key="2"/>
<reference key="1">
    <citation type="submission" date="2005-08" db="EMBL/GenBank/DDBJ databases">
        <title>Complete sequence of Synechococcus sp. CC9902.</title>
        <authorList>
            <person name="Copeland A."/>
            <person name="Lucas S."/>
            <person name="Lapidus A."/>
            <person name="Barry K."/>
            <person name="Detter J.C."/>
            <person name="Glavina T."/>
            <person name="Hammon N."/>
            <person name="Israni S."/>
            <person name="Pitluck S."/>
            <person name="Martinez M."/>
            <person name="Schmutz J."/>
            <person name="Larimer F."/>
            <person name="Land M."/>
            <person name="Kyrpides N."/>
            <person name="Ivanova N."/>
            <person name="Richardson P."/>
        </authorList>
    </citation>
    <scope>NUCLEOTIDE SEQUENCE [LARGE SCALE GENOMIC DNA]</scope>
    <source>
        <strain>CC9902</strain>
    </source>
</reference>
<dbReference type="EMBL" id="CP000097">
    <property type="protein sequence ID" value="ABB27212.1"/>
    <property type="status" value="ALT_INIT"/>
    <property type="molecule type" value="Genomic_DNA"/>
</dbReference>
<dbReference type="RefSeq" id="WP_041425232.1">
    <property type="nucleotide sequence ID" value="NC_007513.1"/>
</dbReference>
<dbReference type="SMR" id="Q3AVR4"/>
<dbReference type="STRING" id="316279.Syncc9902_2254"/>
<dbReference type="KEGG" id="sye:Syncc9902_2254"/>
<dbReference type="eggNOG" id="COG0829">
    <property type="taxonomic scope" value="Bacteria"/>
</dbReference>
<dbReference type="HOGENOM" id="CLU_056339_4_0_3"/>
<dbReference type="OrthoDB" id="9798842at2"/>
<dbReference type="Proteomes" id="UP000002712">
    <property type="component" value="Chromosome"/>
</dbReference>
<dbReference type="GO" id="GO:0005737">
    <property type="term" value="C:cytoplasm"/>
    <property type="evidence" value="ECO:0007669"/>
    <property type="project" value="UniProtKB-SubCell"/>
</dbReference>
<dbReference type="GO" id="GO:0016151">
    <property type="term" value="F:nickel cation binding"/>
    <property type="evidence" value="ECO:0007669"/>
    <property type="project" value="UniProtKB-UniRule"/>
</dbReference>
<dbReference type="HAMAP" id="MF_01384">
    <property type="entry name" value="UreD"/>
    <property type="match status" value="1"/>
</dbReference>
<dbReference type="InterPro" id="IPR002669">
    <property type="entry name" value="UreD"/>
</dbReference>
<dbReference type="PANTHER" id="PTHR33643">
    <property type="entry name" value="UREASE ACCESSORY PROTEIN D"/>
    <property type="match status" value="1"/>
</dbReference>
<dbReference type="PANTHER" id="PTHR33643:SF1">
    <property type="entry name" value="UREASE ACCESSORY PROTEIN D"/>
    <property type="match status" value="1"/>
</dbReference>
<dbReference type="Pfam" id="PF01774">
    <property type="entry name" value="UreD"/>
    <property type="match status" value="1"/>
</dbReference>
<protein>
    <recommendedName>
        <fullName evidence="1">Urease accessory protein UreD</fullName>
    </recommendedName>
</protein>
<feature type="chain" id="PRO_0000340525" description="Urease accessory protein UreD">
    <location>
        <begin position="1"/>
        <end position="311"/>
    </location>
</feature>
<gene>
    <name evidence="1" type="primary">ureD</name>
    <name type="ordered locus">Syncc9902_2254</name>
</gene>
<proteinExistence type="inferred from homology"/>
<accession>Q3AVR4</accession>
<comment type="function">
    <text evidence="1">Required for maturation of urease via the functional incorporation of the urease nickel metallocenter.</text>
</comment>
<comment type="subunit">
    <text evidence="1">UreD, UreF and UreG form a complex that acts as a GTP-hydrolysis-dependent molecular chaperone, activating the urease apoprotein by helping to assemble the nickel containing metallocenter of UreC. The UreE protein probably delivers the nickel.</text>
</comment>
<comment type="subcellular location">
    <subcellularLocation>
        <location evidence="1">Cytoplasm</location>
    </subcellularLocation>
</comment>
<comment type="similarity">
    <text evidence="1">Belongs to the UreD family.</text>
</comment>
<comment type="sequence caution" evidence="2">
    <conflict type="erroneous initiation">
        <sequence resource="EMBL-CDS" id="ABB27212"/>
    </conflict>
</comment>
<sequence>MQRLNPWHGTCRLQFSADADTTHHQGGCTAPFKLMRAERGNDGRCELPLLHSAGGLVGGDQLSVDLELGRNSRALITSVAAQKVYGSIGRSRLHPKGTWANQSVSCRLGSNSDLEWLPQELVVYADALVEQSLDVQLADDASFLSAEIVRLGRTAAGEDLGQGCWRSAVSLRRIGENGTRWEQVDRLELSGDALHHRHGLNGDAVFGTLIWAAPAPLTNPTLKSLLTNARNDRAGLEGQMQCSRLEQGLIARYVGPSSRDARFWFSRIWARTRAQRQLSEPRIPRVWPLQEQPLRQQVFIENIASSNAATH</sequence>
<keyword id="KW-0143">Chaperone</keyword>
<keyword id="KW-0963">Cytoplasm</keyword>
<keyword id="KW-0996">Nickel insertion</keyword>
<keyword id="KW-1185">Reference proteome</keyword>
<name>URED_SYNS9</name>
<organism>
    <name type="scientific">Synechococcus sp. (strain CC9902)</name>
    <dbReference type="NCBI Taxonomy" id="316279"/>
    <lineage>
        <taxon>Bacteria</taxon>
        <taxon>Bacillati</taxon>
        <taxon>Cyanobacteriota</taxon>
        <taxon>Cyanophyceae</taxon>
        <taxon>Synechococcales</taxon>
        <taxon>Synechococcaceae</taxon>
        <taxon>Synechococcus</taxon>
    </lineage>
</organism>